<reference key="1">
    <citation type="journal article" date="2005" name="Science">
        <title>The transcriptional landscape of the mammalian genome.</title>
        <authorList>
            <person name="Carninci P."/>
            <person name="Kasukawa T."/>
            <person name="Katayama S."/>
            <person name="Gough J."/>
            <person name="Frith M.C."/>
            <person name="Maeda N."/>
            <person name="Oyama R."/>
            <person name="Ravasi T."/>
            <person name="Lenhard B."/>
            <person name="Wells C."/>
            <person name="Kodzius R."/>
            <person name="Shimokawa K."/>
            <person name="Bajic V.B."/>
            <person name="Brenner S.E."/>
            <person name="Batalov S."/>
            <person name="Forrest A.R."/>
            <person name="Zavolan M."/>
            <person name="Davis M.J."/>
            <person name="Wilming L.G."/>
            <person name="Aidinis V."/>
            <person name="Allen J.E."/>
            <person name="Ambesi-Impiombato A."/>
            <person name="Apweiler R."/>
            <person name="Aturaliya R.N."/>
            <person name="Bailey T.L."/>
            <person name="Bansal M."/>
            <person name="Baxter L."/>
            <person name="Beisel K.W."/>
            <person name="Bersano T."/>
            <person name="Bono H."/>
            <person name="Chalk A.M."/>
            <person name="Chiu K.P."/>
            <person name="Choudhary V."/>
            <person name="Christoffels A."/>
            <person name="Clutterbuck D.R."/>
            <person name="Crowe M.L."/>
            <person name="Dalla E."/>
            <person name="Dalrymple B.P."/>
            <person name="de Bono B."/>
            <person name="Della Gatta G."/>
            <person name="di Bernardo D."/>
            <person name="Down T."/>
            <person name="Engstrom P."/>
            <person name="Fagiolini M."/>
            <person name="Faulkner G."/>
            <person name="Fletcher C.F."/>
            <person name="Fukushima T."/>
            <person name="Furuno M."/>
            <person name="Futaki S."/>
            <person name="Gariboldi M."/>
            <person name="Georgii-Hemming P."/>
            <person name="Gingeras T.R."/>
            <person name="Gojobori T."/>
            <person name="Green R.E."/>
            <person name="Gustincich S."/>
            <person name="Harbers M."/>
            <person name="Hayashi Y."/>
            <person name="Hensch T.K."/>
            <person name="Hirokawa N."/>
            <person name="Hill D."/>
            <person name="Huminiecki L."/>
            <person name="Iacono M."/>
            <person name="Ikeo K."/>
            <person name="Iwama A."/>
            <person name="Ishikawa T."/>
            <person name="Jakt M."/>
            <person name="Kanapin A."/>
            <person name="Katoh M."/>
            <person name="Kawasawa Y."/>
            <person name="Kelso J."/>
            <person name="Kitamura H."/>
            <person name="Kitano H."/>
            <person name="Kollias G."/>
            <person name="Krishnan S.P."/>
            <person name="Kruger A."/>
            <person name="Kummerfeld S.K."/>
            <person name="Kurochkin I.V."/>
            <person name="Lareau L.F."/>
            <person name="Lazarevic D."/>
            <person name="Lipovich L."/>
            <person name="Liu J."/>
            <person name="Liuni S."/>
            <person name="McWilliam S."/>
            <person name="Madan Babu M."/>
            <person name="Madera M."/>
            <person name="Marchionni L."/>
            <person name="Matsuda H."/>
            <person name="Matsuzawa S."/>
            <person name="Miki H."/>
            <person name="Mignone F."/>
            <person name="Miyake S."/>
            <person name="Morris K."/>
            <person name="Mottagui-Tabar S."/>
            <person name="Mulder N."/>
            <person name="Nakano N."/>
            <person name="Nakauchi H."/>
            <person name="Ng P."/>
            <person name="Nilsson R."/>
            <person name="Nishiguchi S."/>
            <person name="Nishikawa S."/>
            <person name="Nori F."/>
            <person name="Ohara O."/>
            <person name="Okazaki Y."/>
            <person name="Orlando V."/>
            <person name="Pang K.C."/>
            <person name="Pavan W.J."/>
            <person name="Pavesi G."/>
            <person name="Pesole G."/>
            <person name="Petrovsky N."/>
            <person name="Piazza S."/>
            <person name="Reed J."/>
            <person name="Reid J.F."/>
            <person name="Ring B.Z."/>
            <person name="Ringwald M."/>
            <person name="Rost B."/>
            <person name="Ruan Y."/>
            <person name="Salzberg S.L."/>
            <person name="Sandelin A."/>
            <person name="Schneider C."/>
            <person name="Schoenbach C."/>
            <person name="Sekiguchi K."/>
            <person name="Semple C.A."/>
            <person name="Seno S."/>
            <person name="Sessa L."/>
            <person name="Sheng Y."/>
            <person name="Shibata Y."/>
            <person name="Shimada H."/>
            <person name="Shimada K."/>
            <person name="Silva D."/>
            <person name="Sinclair B."/>
            <person name="Sperling S."/>
            <person name="Stupka E."/>
            <person name="Sugiura K."/>
            <person name="Sultana R."/>
            <person name="Takenaka Y."/>
            <person name="Taki K."/>
            <person name="Tammoja K."/>
            <person name="Tan S.L."/>
            <person name="Tang S."/>
            <person name="Taylor M.S."/>
            <person name="Tegner J."/>
            <person name="Teichmann S.A."/>
            <person name="Ueda H.R."/>
            <person name="van Nimwegen E."/>
            <person name="Verardo R."/>
            <person name="Wei C.L."/>
            <person name="Yagi K."/>
            <person name="Yamanishi H."/>
            <person name="Zabarovsky E."/>
            <person name="Zhu S."/>
            <person name="Zimmer A."/>
            <person name="Hide W."/>
            <person name="Bult C."/>
            <person name="Grimmond S.M."/>
            <person name="Teasdale R.D."/>
            <person name="Liu E.T."/>
            <person name="Brusic V."/>
            <person name="Quackenbush J."/>
            <person name="Wahlestedt C."/>
            <person name="Mattick J.S."/>
            <person name="Hume D.A."/>
            <person name="Kai C."/>
            <person name="Sasaki D."/>
            <person name="Tomaru Y."/>
            <person name="Fukuda S."/>
            <person name="Kanamori-Katayama M."/>
            <person name="Suzuki M."/>
            <person name="Aoki J."/>
            <person name="Arakawa T."/>
            <person name="Iida J."/>
            <person name="Imamura K."/>
            <person name="Itoh M."/>
            <person name="Kato T."/>
            <person name="Kawaji H."/>
            <person name="Kawagashira N."/>
            <person name="Kawashima T."/>
            <person name="Kojima M."/>
            <person name="Kondo S."/>
            <person name="Konno H."/>
            <person name="Nakano K."/>
            <person name="Ninomiya N."/>
            <person name="Nishio T."/>
            <person name="Okada M."/>
            <person name="Plessy C."/>
            <person name="Shibata K."/>
            <person name="Shiraki T."/>
            <person name="Suzuki S."/>
            <person name="Tagami M."/>
            <person name="Waki K."/>
            <person name="Watahiki A."/>
            <person name="Okamura-Oho Y."/>
            <person name="Suzuki H."/>
            <person name="Kawai J."/>
            <person name="Hayashizaki Y."/>
        </authorList>
    </citation>
    <scope>NUCLEOTIDE SEQUENCE [LARGE SCALE MRNA] (ISOFORM 3)</scope>
    <scope>NUCLEOTIDE SEQUENCE [LARGE SCALE MRNA] OF 312-883 (ISOFORM 2)</scope>
    <source>
        <strain>C57BL/6J</strain>
        <strain>NOD</strain>
        <tissue>Corpora quadrigemina</tissue>
        <tissue>Spleen</tissue>
    </source>
</reference>
<reference key="2">
    <citation type="journal article" date="2004" name="Genome Res.">
        <title>The status, quality, and expansion of the NIH full-length cDNA project: the Mammalian Gene Collection (MGC).</title>
        <authorList>
            <consortium name="The MGC Project Team"/>
        </authorList>
    </citation>
    <scope>NUCLEOTIDE SEQUENCE [LARGE SCALE MRNA] (ISOFORMS 1 AND 2)</scope>
    <source>
        <strain>C57BL/6J</strain>
        <tissue>Brain</tissue>
    </source>
</reference>
<reference key="3">
    <citation type="journal article" date="1998" name="Exp. Cell Res.">
        <title>DBI-1, a novel gene related to the notch family, modulates mitogenic response to insulin-like growth factor 1.</title>
        <authorList>
            <person name="Hoff H.B. III"/>
            <person name="Tresini M."/>
            <person name="Li S."/>
            <person name="Sell C."/>
        </authorList>
    </citation>
    <scope>NUCLEOTIDE SEQUENCE [MRNA]</scope>
    <source>
        <strain>C57BL/6J</strain>
        <tissue>Embryo</tissue>
    </source>
</reference>
<reference key="4">
    <citation type="journal article" date="2010" name="Cell">
        <title>A tissue-specific atlas of mouse protein phosphorylation and expression.</title>
        <authorList>
            <person name="Huttlin E.L."/>
            <person name="Jedrychowski M.P."/>
            <person name="Elias J.E."/>
            <person name="Goswami T."/>
            <person name="Rad R."/>
            <person name="Beausoleil S.A."/>
            <person name="Villen J."/>
            <person name="Haas W."/>
            <person name="Sowa M.E."/>
            <person name="Gygi S.P."/>
        </authorList>
    </citation>
    <scope>IDENTIFICATION BY MASS SPECTROMETRY [LARGE SCALE ANALYSIS]</scope>
    <source>
        <tissue>Spleen</tissue>
        <tissue>Testis</tissue>
    </source>
</reference>
<protein>
    <recommendedName>
        <fullName>Integrator complex subunit 6</fullName>
        <shortName>Int6</shortName>
    </recommendedName>
    <alternativeName>
        <fullName>DBI-1</fullName>
    </alternativeName>
</protein>
<name>INT6_MOUSE</name>
<feature type="chain" id="PRO_0000259544" description="Integrator complex subunit 6">
    <location>
        <begin position="1"/>
        <end position="883"/>
    </location>
</feature>
<feature type="domain" description="VWFA" evidence="2">
    <location>
        <begin position="3"/>
        <end position="227"/>
    </location>
</feature>
<feature type="region of interest" description="Disordered" evidence="3">
    <location>
        <begin position="666"/>
        <end position="686"/>
    </location>
</feature>
<feature type="short sequence motif" description="Inhibitory loop" evidence="1">
    <location>
        <begin position="625"/>
        <end position="632"/>
    </location>
</feature>
<feature type="modified residue" description="Phosphoserine" evidence="1">
    <location>
        <position position="800"/>
    </location>
</feature>
<feature type="splice variant" id="VSP_021459" description="In isoform 3." evidence="5">
    <original>RSYSVCSPRMLNQC</original>
    <variation>KVFAKSNSGLKQFI</variation>
    <location>
        <begin position="206"/>
        <end position="219"/>
    </location>
</feature>
<feature type="splice variant" id="VSP_021460" description="In isoform 3." evidence="5">
    <location>
        <begin position="220"/>
        <end position="883"/>
    </location>
</feature>
<feature type="splice variant" id="VSP_021461" description="In isoform 2." evidence="4 5">
    <original>E</original>
    <variation>EA</variation>
    <location>
        <position position="246"/>
    </location>
</feature>
<feature type="splice variant" id="VSP_021462" description="In isoform 2." evidence="4 5">
    <location>
        <begin position="691"/>
        <end position="700"/>
    </location>
</feature>
<feature type="sequence conflict" description="In Ref. 1; BAE42868." evidence="6" ref="1">
    <original>A</original>
    <variation>G</variation>
    <location>
        <position position="64"/>
    </location>
</feature>
<feature type="sequence conflict" description="In Ref. 1; BAE42868." evidence="6" ref="1">
    <original>A</original>
    <variation>G</variation>
    <location>
        <position position="95"/>
    </location>
</feature>
<feature type="sequence conflict" description="In Ref. 1; BAE42868." evidence="6" ref="1">
    <original>E</original>
    <variation>G</variation>
    <location>
        <position position="160"/>
    </location>
</feature>
<keyword id="KW-0025">Alternative splicing</keyword>
<keyword id="KW-0158">Chromosome</keyword>
<keyword id="KW-0539">Nucleus</keyword>
<keyword id="KW-0597">Phosphoprotein</keyword>
<keyword id="KW-1185">Reference proteome</keyword>
<gene>
    <name type="primary">Ints6</name>
    <name type="synonym">Dbi1</name>
</gene>
<evidence type="ECO:0000250" key="1">
    <source>
        <dbReference type="UniProtKB" id="Q9UL03"/>
    </source>
</evidence>
<evidence type="ECO:0000255" key="2">
    <source>
        <dbReference type="PROSITE-ProRule" id="PRU00219"/>
    </source>
</evidence>
<evidence type="ECO:0000256" key="3">
    <source>
        <dbReference type="SAM" id="MobiDB-lite"/>
    </source>
</evidence>
<evidence type="ECO:0000303" key="4">
    <source>
    </source>
</evidence>
<evidence type="ECO:0000303" key="5">
    <source>
    </source>
</evidence>
<evidence type="ECO:0000305" key="6"/>
<dbReference type="EMBL" id="AK046055">
    <property type="protein sequence ID" value="BAC32584.1"/>
    <property type="molecule type" value="mRNA"/>
</dbReference>
<dbReference type="EMBL" id="AK172178">
    <property type="protein sequence ID" value="BAE42868.1"/>
    <property type="molecule type" value="mRNA"/>
</dbReference>
<dbReference type="EMBL" id="BC058637">
    <property type="protein sequence ID" value="AAH58637.1"/>
    <property type="molecule type" value="mRNA"/>
</dbReference>
<dbReference type="EMBL" id="BC059263">
    <property type="protein sequence ID" value="AAH59263.1"/>
    <property type="molecule type" value="mRNA"/>
</dbReference>
<dbReference type="EMBL" id="U57368">
    <property type="protein sequence ID" value="AAB01338.1"/>
    <property type="status" value="ALT_SEQ"/>
    <property type="molecule type" value="mRNA"/>
</dbReference>
<dbReference type="CCDS" id="CCDS27191.1">
    <molecule id="Q6PCM2-1"/>
</dbReference>
<dbReference type="PIR" id="T30176">
    <property type="entry name" value="T30176"/>
</dbReference>
<dbReference type="RefSeq" id="NP_032741.2">
    <molecule id="Q6PCM2-1"/>
    <property type="nucleotide sequence ID" value="NM_008715.2"/>
</dbReference>
<dbReference type="RefSeq" id="XP_006518745.1">
    <molecule id="Q6PCM2-2"/>
    <property type="nucleotide sequence ID" value="XM_006518682.5"/>
</dbReference>
<dbReference type="RefSeq" id="XP_011243288.1">
    <molecule id="Q6PCM2-1"/>
    <property type="nucleotide sequence ID" value="XM_011244986.4"/>
</dbReference>
<dbReference type="RefSeq" id="XP_017171398.1">
    <molecule id="Q6PCM2-2"/>
    <property type="nucleotide sequence ID" value="XM_017315909.3"/>
</dbReference>
<dbReference type="SMR" id="Q6PCM2"/>
<dbReference type="BioGRID" id="201810">
    <property type="interactions" value="9"/>
</dbReference>
<dbReference type="FunCoup" id="Q6PCM2">
    <property type="interactions" value="4638"/>
</dbReference>
<dbReference type="IntAct" id="Q6PCM2">
    <property type="interactions" value="1"/>
</dbReference>
<dbReference type="MINT" id="Q6PCM2"/>
<dbReference type="STRING" id="10090.ENSMUSP00000152954"/>
<dbReference type="GlyGen" id="Q6PCM2">
    <property type="glycosylation" value="1 site, 1 O-linked glycan (1 site)"/>
</dbReference>
<dbReference type="iPTMnet" id="Q6PCM2"/>
<dbReference type="PhosphoSitePlus" id="Q6PCM2"/>
<dbReference type="PaxDb" id="10090-ENSMUSP00000086788"/>
<dbReference type="PeptideAtlas" id="Q6PCM2"/>
<dbReference type="ProteomicsDB" id="269071">
    <molecule id="Q6PCM2-1"/>
</dbReference>
<dbReference type="ProteomicsDB" id="269072">
    <molecule id="Q6PCM2-2"/>
</dbReference>
<dbReference type="ProteomicsDB" id="269073">
    <molecule id="Q6PCM2-3"/>
</dbReference>
<dbReference type="Pumba" id="Q6PCM2"/>
<dbReference type="Antibodypedia" id="730">
    <property type="antibodies" value="147 antibodies from 26 providers"/>
</dbReference>
<dbReference type="DNASU" id="18130"/>
<dbReference type="Ensembl" id="ENSMUST00000053959.7">
    <molecule id="Q6PCM2-1"/>
    <property type="protein sequence ID" value="ENSMUSP00000086788.5"/>
    <property type="gene ID" value="ENSMUSG00000035161.8"/>
</dbReference>
<dbReference type="Ensembl" id="ENSMUST00000223585.2">
    <molecule id="Q6PCM2-1"/>
    <property type="protein sequence ID" value="ENSMUSP00000152954.2"/>
    <property type="gene ID" value="ENSMUSG00000035161.8"/>
</dbReference>
<dbReference type="GeneID" id="18130"/>
<dbReference type="KEGG" id="mmu:18130"/>
<dbReference type="UCSC" id="uc007ugp.2">
    <molecule id="Q6PCM2-1"/>
    <property type="organism name" value="mouse"/>
</dbReference>
<dbReference type="UCSC" id="uc007ugr.1">
    <molecule id="Q6PCM2-2"/>
    <property type="organism name" value="mouse"/>
</dbReference>
<dbReference type="UCSC" id="uc007ugu.1">
    <molecule id="Q6PCM2-3"/>
    <property type="organism name" value="mouse"/>
</dbReference>
<dbReference type="AGR" id="MGI:1202397"/>
<dbReference type="CTD" id="26512"/>
<dbReference type="MGI" id="MGI:1202397">
    <property type="gene designation" value="Ints6"/>
</dbReference>
<dbReference type="VEuPathDB" id="HostDB:ENSMUSG00000035161"/>
<dbReference type="eggNOG" id="KOG3768">
    <property type="taxonomic scope" value="Eukaryota"/>
</dbReference>
<dbReference type="GeneTree" id="ENSGT00390000016655"/>
<dbReference type="HOGENOM" id="CLU_006789_0_0_1"/>
<dbReference type="InParanoid" id="Q6PCM2"/>
<dbReference type="OMA" id="LNQNHYG"/>
<dbReference type="OrthoDB" id="9449012at2759"/>
<dbReference type="PhylomeDB" id="Q6PCM2"/>
<dbReference type="TreeFam" id="TF323386"/>
<dbReference type="Reactome" id="R-MMU-6807505">
    <property type="pathway name" value="RNA polymerase II transcribes snRNA genes"/>
</dbReference>
<dbReference type="BioGRID-ORCS" id="18130">
    <property type="hits" value="16 hits in 76 CRISPR screens"/>
</dbReference>
<dbReference type="ChiTaRS" id="Ints6">
    <property type="organism name" value="mouse"/>
</dbReference>
<dbReference type="PRO" id="PR:Q6PCM2"/>
<dbReference type="Proteomes" id="UP000000589">
    <property type="component" value="Chromosome 14"/>
</dbReference>
<dbReference type="RNAct" id="Q6PCM2">
    <property type="molecule type" value="protein"/>
</dbReference>
<dbReference type="Bgee" id="ENSMUSG00000035161">
    <property type="expression patterns" value="Expressed in spermatocyte and 242 other cell types or tissues"/>
</dbReference>
<dbReference type="GO" id="GO:0015629">
    <property type="term" value="C:actin cytoskeleton"/>
    <property type="evidence" value="ECO:0007669"/>
    <property type="project" value="Ensembl"/>
</dbReference>
<dbReference type="GO" id="GO:0000785">
    <property type="term" value="C:chromatin"/>
    <property type="evidence" value="ECO:0000250"/>
    <property type="project" value="UniProtKB"/>
</dbReference>
<dbReference type="GO" id="GO:0160232">
    <property type="term" value="C:INTAC complex"/>
    <property type="evidence" value="ECO:0000250"/>
    <property type="project" value="UniProtKB"/>
</dbReference>
<dbReference type="GO" id="GO:0032039">
    <property type="term" value="C:integrator complex"/>
    <property type="evidence" value="ECO:0000250"/>
    <property type="project" value="HGNC"/>
</dbReference>
<dbReference type="GO" id="GO:0005654">
    <property type="term" value="C:nucleoplasm"/>
    <property type="evidence" value="ECO:0007669"/>
    <property type="project" value="Ensembl"/>
</dbReference>
<dbReference type="GO" id="GO:0005634">
    <property type="term" value="C:nucleus"/>
    <property type="evidence" value="ECO:0000250"/>
    <property type="project" value="UniProtKB"/>
</dbReference>
<dbReference type="GO" id="GO:0030674">
    <property type="term" value="F:protein-macromolecule adaptor activity"/>
    <property type="evidence" value="ECO:0000250"/>
    <property type="project" value="UniProtKB"/>
</dbReference>
<dbReference type="GO" id="GO:0071168">
    <property type="term" value="P:protein localization to chromatin"/>
    <property type="evidence" value="ECO:0000250"/>
    <property type="project" value="UniProtKB"/>
</dbReference>
<dbReference type="GO" id="GO:0160240">
    <property type="term" value="P:RNA polymerase II transcription initiation surveillance"/>
    <property type="evidence" value="ECO:0000250"/>
    <property type="project" value="UniProtKB"/>
</dbReference>
<dbReference type="GO" id="GO:0016180">
    <property type="term" value="P:snRNA processing"/>
    <property type="evidence" value="ECO:0000250"/>
    <property type="project" value="HGNC"/>
</dbReference>
<dbReference type="CDD" id="cd00198">
    <property type="entry name" value="vWFA"/>
    <property type="match status" value="1"/>
</dbReference>
<dbReference type="FunFam" id="3.40.50.410:FF:000010">
    <property type="entry name" value="Integrator complex subunit 6 like"/>
    <property type="match status" value="1"/>
</dbReference>
<dbReference type="Gene3D" id="3.40.50.410">
    <property type="entry name" value="von Willebrand factor, type A domain"/>
    <property type="match status" value="1"/>
</dbReference>
<dbReference type="InterPro" id="IPR029307">
    <property type="entry name" value="INT_SG_DDX_CT_C"/>
</dbReference>
<dbReference type="InterPro" id="IPR051113">
    <property type="entry name" value="Integrator_subunit6"/>
</dbReference>
<dbReference type="InterPro" id="IPR002035">
    <property type="entry name" value="VWF_A"/>
</dbReference>
<dbReference type="InterPro" id="IPR036465">
    <property type="entry name" value="vWFA_dom_sf"/>
</dbReference>
<dbReference type="PANTHER" id="PTHR12957">
    <property type="entry name" value="DEAD/H BOX POLYPEPTIDE 26/DICE1-RELATED"/>
    <property type="match status" value="1"/>
</dbReference>
<dbReference type="PANTHER" id="PTHR12957:SF23">
    <property type="entry name" value="INTEGRATOR COMPLEX SUBUNIT 6"/>
    <property type="match status" value="1"/>
</dbReference>
<dbReference type="Pfam" id="PF25462">
    <property type="entry name" value="Beta-barrel_INTS6"/>
    <property type="match status" value="1"/>
</dbReference>
<dbReference type="Pfam" id="PF15300">
    <property type="entry name" value="INT_SG_DDX_CT_C"/>
    <property type="match status" value="1"/>
</dbReference>
<dbReference type="Pfam" id="PF13519">
    <property type="entry name" value="VWA_2"/>
    <property type="match status" value="1"/>
</dbReference>
<dbReference type="SUPFAM" id="SSF53300">
    <property type="entry name" value="vWA-like"/>
    <property type="match status" value="1"/>
</dbReference>
<dbReference type="PROSITE" id="PS50234">
    <property type="entry name" value="VWFA"/>
    <property type="match status" value="1"/>
</dbReference>
<accession>Q6PCM2</accession>
<accession>Q3TA02</accession>
<accession>Q61204</accession>
<accession>Q6PDL7</accession>
<accession>Q8BQZ7</accession>
<organism>
    <name type="scientific">Mus musculus</name>
    <name type="common">Mouse</name>
    <dbReference type="NCBI Taxonomy" id="10090"/>
    <lineage>
        <taxon>Eukaryota</taxon>
        <taxon>Metazoa</taxon>
        <taxon>Chordata</taxon>
        <taxon>Craniata</taxon>
        <taxon>Vertebrata</taxon>
        <taxon>Euteleostomi</taxon>
        <taxon>Mammalia</taxon>
        <taxon>Eutheria</taxon>
        <taxon>Euarchontoglires</taxon>
        <taxon>Glires</taxon>
        <taxon>Rodentia</taxon>
        <taxon>Myomorpha</taxon>
        <taxon>Muroidea</taxon>
        <taxon>Muridae</taxon>
        <taxon>Murinae</taxon>
        <taxon>Mus</taxon>
        <taxon>Mus</taxon>
    </lineage>
</organism>
<sequence length="883" mass="99661">MPILLFLIDTSASMNQRSHLGTTYLDTAKGAVETFMKLRARDPASRGDRYMLVTFEEPPYAIKAGWKENHATFMNELKNLQAEGLTTLGQSLRTAFDLLNLNRLVTGIDNYGQGRNPFFLEPAIIITITDGSKLTTTSGVQDELHLPLNSPLPGSELTKEPFRWDQRLFALVLRLPGTMSVESEQLTGVPLDDSAITPMCEVTGGRSYSVCSPRMLNQCLESLVQKVQSGVVINFEKAGPDPPPAEEGQPDISRPFGSQPWHSCHKLIYVRPNPKTGVPIGHWPVPESFWPDQNSPTLPPRTSHPVVKFSCTDCEPMVIDKLPFDKYELEPSPLTQFILERKSPQTCWQVYVSNSAKYNELGHPFGYLKASTALTCVNLFVMPYNYPVLLPLLDDLFKVHKAKPTLKWRQSFESYLKTMPPYYLGPLKKAVRMMGAPNLIADSMEYGLSYSVISYLKKLSQQAKIESDRVIGSVGKKVVQETGIKVRSRSHGLSMAHRKGFQVLQGISEDVPHRLLDLNMKEYTGFQVALLNKDLKPQTFRNAYDIPRRNLLDHLTRMRSNLLKSTRKFLKGQDEDQVHSVPIAQMGNYQEYLKQVPSPLRELDPDQPRRLHTFGNPFKLDKKGMMIDEADEFVAGPQNKHKRPGEPSMQGIPKRRRCASPLLRGRRQSPAVNSHIGGKGPPAPMTQAQPGLIKPLPLHKEATNDSIVDDVVENHVADQLSSDMTPNAMDTEFLTSPPNLLEPSTNHTEALGHEHLGNNDLTVGGFLENHEEPRNKEQSAEENIPASSLNKGKKLMHCRSHEEVNTELKAQIMKEIRKPGRKYERIFTLLKHVQGSLQTRLIFLQNVIKEASRFKKRMLIEQLENFLDEIHRRANQINHINSN</sequence>
<comment type="function">
    <text evidence="1">Component of the integrator complex, a multiprotein complex that terminates RNA polymerase II (Pol II) transcription in the promoter-proximal region of genes. The integrator complex provides a quality checkpoint during transcription elongation by driving premature transcription termination of transcripts that are unfavorably configured for transcriptional elongation: the complex terminates transcription by (1) catalyzing dephosphorylation of the C-terminal domain (CTD) of Pol II subunit POLR2A/RPB1 and SUPT5H/SPT5, (2) degrading the exiting nascent RNA transcript via endonuclease activity and (3) promoting the release of Pol II from bound DNA. The integrator complex is also involved in terminating the synthesis of non-coding Pol II transcripts, such as enhancer RNAs (eRNAs), small nuclear RNAs (snRNAs), telomerase RNAs and long non-coding RNAs (lncRNAs). Within the integrator complex, INTS6 acts as a molecular adapter that promotes assembly of protein phosphatase 2A (PP2A) subunits to the integrator core complex, promoting recruitment of PP2A to transcription pause-release checkpoint. Mediates recruitment of cytoplasmic dynein to the nuclear envelope, probably as component of the integrator complex.</text>
</comment>
<comment type="subunit">
    <text evidence="1">Component of the Integrator complex, composed of core subunits INTS1, INTS2, INTS3, INTS4, INTS5, INTS6, INTS7, INTS8, INTS9/RC74, INTS10, INTS11/CPSF3L, INTS12, INTS13, INTS14 and INTS15. The core complex associates with protein phosphatase 2A subunits PPP2CA and PPP2R1A, to form the Integrator-PP2A (INTAC) complex.</text>
</comment>
<comment type="subcellular location">
    <subcellularLocation>
        <location evidence="1">Nucleus</location>
    </subcellularLocation>
    <subcellularLocation>
        <location evidence="1">Chromosome</location>
    </subcellularLocation>
    <text evidence="1">Associates with chromatin and transcription pause-release checkpoint.</text>
</comment>
<comment type="alternative products">
    <event type="alternative splicing"/>
    <isoform>
        <id>Q6PCM2-1</id>
        <name>1</name>
        <sequence type="displayed"/>
    </isoform>
    <isoform>
        <id>Q6PCM2-2</id>
        <name>2</name>
        <sequence type="described" ref="VSP_021461 VSP_021462"/>
    </isoform>
    <isoform>
        <id>Q6PCM2-3</id>
        <name>3</name>
        <sequence type="described" ref="VSP_021459 VSP_021460"/>
    </isoform>
</comment>
<comment type="domain">
    <text evidence="1">The inhibitory loop acts as a regulator of protein phosphatase 2A (PP2A) activity: Asp-628 and Glu-629 residues mimic phosphoserine and phosphothreonine residues and bind to the PP2A catalytic subunit PPP2CA active site to block substrate-binding.</text>
</comment>
<comment type="similarity">
    <text evidence="6">Belongs to the Integrator subunit 6 family.</text>
</comment>
<comment type="sequence caution" evidence="6">
    <conflict type="miscellaneous discrepancy">
        <sequence resource="EMBL-CDS" id="AAB01338"/>
    </conflict>
    <text>Chimera.</text>
</comment>
<proteinExistence type="evidence at protein level"/>